<gene>
    <name evidence="1" type="primary">murQ1</name>
    <name type="ordered locus">VC_0206</name>
</gene>
<name>MURQ1_VIBCH</name>
<proteinExistence type="inferred from homology"/>
<sequence length="300" mass="31311">MKIDLTRLVTESRNPASEQIDTLPTLDMLKVINQQDQLVALAVAQTLPQVAQAVEAIATAFAQGGRLIYMGAGTSGRLGILDASECPPTYGSQPEQVIGLIAGGHTAILKAVENAEDNRELGQSDLKALHLSEKDVLVGIAASGRTPYVIAGMEYARSVGATVVSLACNPGCPMEAYADIVITPVVGAEVVTGSSRMKAGTAQKLVLNMLTTGAMIKSGKVFGNLMVDVEATNAKLIQRQTNIVVEATGVSAEQAEAALAACGRHCKTAILMILGGFSAEQAAQKLTQHQGFIRAALNQE</sequence>
<evidence type="ECO:0000255" key="1">
    <source>
        <dbReference type="HAMAP-Rule" id="MF_00068"/>
    </source>
</evidence>
<evidence type="ECO:0000305" key="2"/>
<keyword id="KW-0119">Carbohydrate metabolism</keyword>
<keyword id="KW-0456">Lyase</keyword>
<keyword id="KW-1185">Reference proteome</keyword>
<organism>
    <name type="scientific">Vibrio cholerae serotype O1 (strain ATCC 39315 / El Tor Inaba N16961)</name>
    <dbReference type="NCBI Taxonomy" id="243277"/>
    <lineage>
        <taxon>Bacteria</taxon>
        <taxon>Pseudomonadati</taxon>
        <taxon>Pseudomonadota</taxon>
        <taxon>Gammaproteobacteria</taxon>
        <taxon>Vibrionales</taxon>
        <taxon>Vibrionaceae</taxon>
        <taxon>Vibrio</taxon>
    </lineage>
</organism>
<dbReference type="EC" id="4.2.1.126" evidence="1"/>
<dbReference type="EMBL" id="AE003852">
    <property type="protein sequence ID" value="AAF93382.1"/>
    <property type="status" value="ALT_INIT"/>
    <property type="molecule type" value="Genomic_DNA"/>
</dbReference>
<dbReference type="PIR" id="G82352">
    <property type="entry name" value="G82352"/>
</dbReference>
<dbReference type="RefSeq" id="NP_229863.1">
    <property type="nucleotide sequence ID" value="NC_002505.1"/>
</dbReference>
<dbReference type="SMR" id="Q9KVE0"/>
<dbReference type="STRING" id="243277.VC_0206"/>
<dbReference type="DNASU" id="2614175"/>
<dbReference type="EnsemblBacteria" id="AAF93382">
    <property type="protein sequence ID" value="AAF93382"/>
    <property type="gene ID" value="VC_0206"/>
</dbReference>
<dbReference type="KEGG" id="vch:VC_0206"/>
<dbReference type="PATRIC" id="fig|243277.26.peg.187"/>
<dbReference type="eggNOG" id="COG2103">
    <property type="taxonomic scope" value="Bacteria"/>
</dbReference>
<dbReference type="HOGENOM" id="CLU_049049_1_1_6"/>
<dbReference type="UniPathway" id="UPA00342"/>
<dbReference type="UniPathway" id="UPA00343"/>
<dbReference type="UniPathway" id="UPA00544"/>
<dbReference type="Proteomes" id="UP000000584">
    <property type="component" value="Chromosome 1"/>
</dbReference>
<dbReference type="GO" id="GO:0097367">
    <property type="term" value="F:carbohydrate derivative binding"/>
    <property type="evidence" value="ECO:0007669"/>
    <property type="project" value="InterPro"/>
</dbReference>
<dbReference type="GO" id="GO:0016835">
    <property type="term" value="F:carbon-oxygen lyase activity"/>
    <property type="evidence" value="ECO:0000318"/>
    <property type="project" value="GO_Central"/>
</dbReference>
<dbReference type="GO" id="GO:0016803">
    <property type="term" value="F:ether hydrolase activity"/>
    <property type="evidence" value="ECO:0000318"/>
    <property type="project" value="GO_Central"/>
</dbReference>
<dbReference type="GO" id="GO:0097175">
    <property type="term" value="P:1,6-anhydro-N-acetyl-beta-muramic acid catabolic process"/>
    <property type="evidence" value="ECO:0007669"/>
    <property type="project" value="UniProtKB-UniRule"/>
</dbReference>
<dbReference type="GO" id="GO:0046348">
    <property type="term" value="P:amino sugar catabolic process"/>
    <property type="evidence" value="ECO:0000318"/>
    <property type="project" value="GO_Central"/>
</dbReference>
<dbReference type="GO" id="GO:0097173">
    <property type="term" value="P:N-acetylmuramic acid catabolic process"/>
    <property type="evidence" value="ECO:0007669"/>
    <property type="project" value="UniProtKB-UniPathway"/>
</dbReference>
<dbReference type="GO" id="GO:0009254">
    <property type="term" value="P:peptidoglycan turnover"/>
    <property type="evidence" value="ECO:0000318"/>
    <property type="project" value="GO_Central"/>
</dbReference>
<dbReference type="CDD" id="cd05007">
    <property type="entry name" value="SIS_Etherase"/>
    <property type="match status" value="1"/>
</dbReference>
<dbReference type="FunFam" id="1.10.8.1080:FF:000001">
    <property type="entry name" value="N-acetylmuramic acid 6-phosphate etherase"/>
    <property type="match status" value="1"/>
</dbReference>
<dbReference type="FunFam" id="3.40.50.10490:FF:000014">
    <property type="entry name" value="N-acetylmuramic acid 6-phosphate etherase"/>
    <property type="match status" value="1"/>
</dbReference>
<dbReference type="Gene3D" id="1.10.8.1080">
    <property type="match status" value="1"/>
</dbReference>
<dbReference type="Gene3D" id="3.40.50.10490">
    <property type="entry name" value="Glucose-6-phosphate isomerase like protein, domain 1"/>
    <property type="match status" value="1"/>
</dbReference>
<dbReference type="HAMAP" id="MF_00068">
    <property type="entry name" value="MurQ"/>
    <property type="match status" value="1"/>
</dbReference>
<dbReference type="InterPro" id="IPR005488">
    <property type="entry name" value="Etherase_MurQ"/>
</dbReference>
<dbReference type="InterPro" id="IPR005486">
    <property type="entry name" value="Glucokinase_regulatory_CS"/>
</dbReference>
<dbReference type="InterPro" id="IPR040190">
    <property type="entry name" value="MURQ/GCKR"/>
</dbReference>
<dbReference type="InterPro" id="IPR001347">
    <property type="entry name" value="SIS_dom"/>
</dbReference>
<dbReference type="InterPro" id="IPR046348">
    <property type="entry name" value="SIS_dom_sf"/>
</dbReference>
<dbReference type="NCBIfam" id="TIGR00274">
    <property type="entry name" value="N-acetylmuramic acid 6-phosphate etherase"/>
    <property type="match status" value="1"/>
</dbReference>
<dbReference type="NCBIfam" id="NF003915">
    <property type="entry name" value="PRK05441.1"/>
    <property type="match status" value="1"/>
</dbReference>
<dbReference type="NCBIfam" id="NF009222">
    <property type="entry name" value="PRK12570.1"/>
    <property type="match status" value="1"/>
</dbReference>
<dbReference type="PANTHER" id="PTHR10088">
    <property type="entry name" value="GLUCOKINASE REGULATORY PROTEIN"/>
    <property type="match status" value="1"/>
</dbReference>
<dbReference type="PANTHER" id="PTHR10088:SF4">
    <property type="entry name" value="GLUCOKINASE REGULATORY PROTEIN"/>
    <property type="match status" value="1"/>
</dbReference>
<dbReference type="Pfam" id="PF22645">
    <property type="entry name" value="GKRP_SIS_N"/>
    <property type="match status" value="1"/>
</dbReference>
<dbReference type="SUPFAM" id="SSF53697">
    <property type="entry name" value="SIS domain"/>
    <property type="match status" value="1"/>
</dbReference>
<dbReference type="PROSITE" id="PS01272">
    <property type="entry name" value="GCKR"/>
    <property type="match status" value="1"/>
</dbReference>
<dbReference type="PROSITE" id="PS51464">
    <property type="entry name" value="SIS"/>
    <property type="match status" value="1"/>
</dbReference>
<accession>Q9KVE0</accession>
<feature type="chain" id="PRO_0000214841" description="N-acetylmuramic acid 6-phosphate etherase 1">
    <location>
        <begin position="1"/>
        <end position="300"/>
    </location>
</feature>
<feature type="domain" description="SIS" evidence="1">
    <location>
        <begin position="57"/>
        <end position="220"/>
    </location>
</feature>
<feature type="active site" description="Proton donor" evidence="1">
    <location>
        <position position="85"/>
    </location>
</feature>
<feature type="active site" evidence="1">
    <location>
        <position position="116"/>
    </location>
</feature>
<reference key="1">
    <citation type="journal article" date="2000" name="Nature">
        <title>DNA sequence of both chromosomes of the cholera pathogen Vibrio cholerae.</title>
        <authorList>
            <person name="Heidelberg J.F."/>
            <person name="Eisen J.A."/>
            <person name="Nelson W.C."/>
            <person name="Clayton R.A."/>
            <person name="Gwinn M.L."/>
            <person name="Dodson R.J."/>
            <person name="Haft D.H."/>
            <person name="Hickey E.K."/>
            <person name="Peterson J.D."/>
            <person name="Umayam L.A."/>
            <person name="Gill S.R."/>
            <person name="Nelson K.E."/>
            <person name="Read T.D."/>
            <person name="Tettelin H."/>
            <person name="Richardson D.L."/>
            <person name="Ermolaeva M.D."/>
            <person name="Vamathevan J.J."/>
            <person name="Bass S."/>
            <person name="Qin H."/>
            <person name="Dragoi I."/>
            <person name="Sellers P."/>
            <person name="McDonald L.A."/>
            <person name="Utterback T.R."/>
            <person name="Fleischmann R.D."/>
            <person name="Nierman W.C."/>
            <person name="White O."/>
            <person name="Salzberg S.L."/>
            <person name="Smith H.O."/>
            <person name="Colwell R.R."/>
            <person name="Mekalanos J.J."/>
            <person name="Venter J.C."/>
            <person name="Fraser C.M."/>
        </authorList>
    </citation>
    <scope>NUCLEOTIDE SEQUENCE [LARGE SCALE GENOMIC DNA]</scope>
    <source>
        <strain>ATCC 39315 / El Tor Inaba N16961</strain>
    </source>
</reference>
<comment type="function">
    <text evidence="1">Specifically catalyzes the cleavage of the D-lactyl ether substituent of MurNAc 6-phosphate, producing GlcNAc 6-phosphate and D-lactate. Together with AnmK, is also required for the utilization of anhydro-N-acetylmuramic acid (anhMurNAc) either imported from the medium or derived from its own cell wall murein, and thus plays a role in cell wall recycling.</text>
</comment>
<comment type="catalytic activity">
    <reaction evidence="1">
        <text>N-acetyl-D-muramate 6-phosphate + H2O = N-acetyl-D-glucosamine 6-phosphate + (R)-lactate</text>
        <dbReference type="Rhea" id="RHEA:26410"/>
        <dbReference type="ChEBI" id="CHEBI:15377"/>
        <dbReference type="ChEBI" id="CHEBI:16004"/>
        <dbReference type="ChEBI" id="CHEBI:57513"/>
        <dbReference type="ChEBI" id="CHEBI:58722"/>
        <dbReference type="EC" id="4.2.1.126"/>
    </reaction>
</comment>
<comment type="pathway">
    <text evidence="1">Amino-sugar metabolism; 1,6-anhydro-N-acetylmuramate degradation.</text>
</comment>
<comment type="pathway">
    <text evidence="1">Amino-sugar metabolism; N-acetylmuramate degradation.</text>
</comment>
<comment type="pathway">
    <text evidence="1">Cell wall biogenesis; peptidoglycan recycling.</text>
</comment>
<comment type="subunit">
    <text evidence="1">Homodimer.</text>
</comment>
<comment type="miscellaneous">
    <text evidence="1">A lyase-type mechanism (elimination/hydration) is suggested for the cleavage of the lactyl ether bond of MurNAc 6-phosphate, with the formation of an alpha,beta-unsaturated aldehyde intermediate with (E)-stereochemistry, followed by the syn addition of water to give product.</text>
</comment>
<comment type="similarity">
    <text evidence="1">Belongs to the GCKR-like family. MurNAc-6-P etherase subfamily.</text>
</comment>
<comment type="sequence caution" evidence="2">
    <conflict type="erroneous initiation">
        <sequence resource="EMBL-CDS" id="AAF93382"/>
    </conflict>
</comment>
<protein>
    <recommendedName>
        <fullName evidence="1">N-acetylmuramic acid 6-phosphate etherase 1</fullName>
        <shortName evidence="1">MurNAc-6-P etherase 1</shortName>
        <ecNumber evidence="1">4.2.1.126</ecNumber>
    </recommendedName>
    <alternativeName>
        <fullName evidence="1">N-acetylmuramic acid 6-phosphate hydrolase 1</fullName>
    </alternativeName>
    <alternativeName>
        <fullName evidence="1">N-acetylmuramic acid 6-phosphate lyase 1</fullName>
    </alternativeName>
</protein>